<sequence>MAGSKSPKGLFAARKLRLKRLKFSWSQRSFKRRMLALKEKFDPLEGAPMARGIVLEKVGIESRQPNSAVRKAVRVQLVKNGRIVTAFVPGDGGVNFIDEHDEVVIAGIGGTLGRSMGDLPGVRYKVVMVNGVSLDALYKGKKQKPVR</sequence>
<organism>
    <name type="scientific">Sulfolobus acidocaldarius (strain ATCC 33909 / DSM 639 / JCM 8929 / NBRC 15157 / NCIMB 11770)</name>
    <dbReference type="NCBI Taxonomy" id="330779"/>
    <lineage>
        <taxon>Archaea</taxon>
        <taxon>Thermoproteota</taxon>
        <taxon>Thermoprotei</taxon>
        <taxon>Sulfolobales</taxon>
        <taxon>Sulfolobaceae</taxon>
        <taxon>Sulfolobus</taxon>
    </lineage>
</organism>
<name>RS12_SULAC</name>
<gene>
    <name evidence="1" type="primary">rps12</name>
    <name type="ordered locus">Saci_0688</name>
</gene>
<proteinExistence type="evidence at protein level"/>
<evidence type="ECO:0000255" key="1">
    <source>
        <dbReference type="HAMAP-Rule" id="MF_00403"/>
    </source>
</evidence>
<evidence type="ECO:0000305" key="2"/>
<reference key="1">
    <citation type="journal article" date="1989" name="Nucleic Acids Res.">
        <title>Organization and nucleotide sequence of the genes encoding the large subunits A, B and C of the DNA-dependent RNA polymerase of the archaebacterium Sulfolobus acidocaldarius.</title>
        <authorList>
            <person name="Puehler G."/>
            <person name="Lottspeich F."/>
            <person name="Zillig W."/>
        </authorList>
    </citation>
    <scope>NUCLEOTIDE SEQUENCE [GENOMIC DNA]</scope>
    <source>
        <strain>ATCC 33909 / DSM 639 / JCM 8929 / NBRC 15157 / NCIMB 11770</strain>
    </source>
</reference>
<reference key="2">
    <citation type="journal article" date="2005" name="J. Bacteriol.">
        <title>The genome of Sulfolobus acidocaldarius, a model organism of the Crenarchaeota.</title>
        <authorList>
            <person name="Chen L."/>
            <person name="Bruegger K."/>
            <person name="Skovgaard M."/>
            <person name="Redder P."/>
            <person name="She Q."/>
            <person name="Torarinsson E."/>
            <person name="Greve B."/>
            <person name="Awayez M."/>
            <person name="Zibat A."/>
            <person name="Klenk H.-P."/>
            <person name="Garrett R.A."/>
        </authorList>
    </citation>
    <scope>NUCLEOTIDE SEQUENCE [LARGE SCALE GENOMIC DNA]</scope>
    <source>
        <strain>ATCC 33909 / DSM 639 / JCM 8929 / NBRC 15157 / NCIMB 11770</strain>
    </source>
</reference>
<comment type="function">
    <text evidence="1">With S4 and S5 plays an important role in translational accuracy. Located at the interface of the 30S and 50S subunits.</text>
</comment>
<comment type="subunit">
    <text>Part of the 30S ribosomal subunit.</text>
</comment>
<comment type="similarity">
    <text evidence="1">Belongs to the universal ribosomal protein uS12 family.</text>
</comment>
<comment type="sequence caution" evidence="2">
    <conflict type="erroneous initiation">
        <sequence resource="EMBL-CDS" id="CAA32929"/>
    </conflict>
    <text>Truncated N-terminus.</text>
</comment>
<protein>
    <recommendedName>
        <fullName evidence="1">Small ribosomal subunit protein uS12</fullName>
    </recommendedName>
    <alternativeName>
        <fullName evidence="2">30S ribosomal protein S12</fullName>
    </alternativeName>
</protein>
<keyword id="KW-0002">3D-structure</keyword>
<keyword id="KW-1185">Reference proteome</keyword>
<keyword id="KW-0687">Ribonucleoprotein</keyword>
<keyword id="KW-0689">Ribosomal protein</keyword>
<keyword id="KW-0694">RNA-binding</keyword>
<keyword id="KW-0699">rRNA-binding</keyword>
<accession>P11524</accession>
<accession>Q4JAW1</accession>
<feature type="chain" id="PRO_0000146381" description="Small ribosomal subunit protein uS12">
    <location>
        <begin position="1"/>
        <end position="147"/>
    </location>
</feature>
<feature type="sequence conflict" description="In Ref. 1; CAA32929." evidence="2" ref="1">
    <original>KQKPVR</original>
    <variation>EAETSKINFR</variation>
    <location>
        <begin position="142"/>
        <end position="147"/>
    </location>
</feature>
<dbReference type="EMBL" id="X14818">
    <property type="protein sequence ID" value="CAA32929.1"/>
    <property type="status" value="ALT_INIT"/>
    <property type="molecule type" value="Genomic_DNA"/>
</dbReference>
<dbReference type="EMBL" id="CP000077">
    <property type="protein sequence ID" value="AAY80068.1"/>
    <property type="molecule type" value="Genomic_DNA"/>
</dbReference>
<dbReference type="PIR" id="S04721">
    <property type="entry name" value="R3UC12"/>
</dbReference>
<dbReference type="RefSeq" id="WP_011277570.1">
    <property type="nucleotide sequence ID" value="NC_007181.1"/>
</dbReference>
<dbReference type="PDB" id="8HKX">
    <property type="method" value="EM"/>
    <property type="resolution" value="3.14 A"/>
    <property type="chains" value="S12P=3-145"/>
</dbReference>
<dbReference type="PDB" id="8HKY">
    <property type="method" value="EM"/>
    <property type="resolution" value="4.45 A"/>
    <property type="chains" value="S12P=3-145"/>
</dbReference>
<dbReference type="PDB" id="8HKZ">
    <property type="method" value="EM"/>
    <property type="resolution" value="4.78 A"/>
    <property type="chains" value="S12P=3-145"/>
</dbReference>
<dbReference type="PDB" id="8HL1">
    <property type="method" value="EM"/>
    <property type="resolution" value="3.93 A"/>
    <property type="chains" value="S12P=3-145"/>
</dbReference>
<dbReference type="PDB" id="8HL2">
    <property type="method" value="EM"/>
    <property type="resolution" value="4.10 A"/>
    <property type="chains" value="S12P=3-145"/>
</dbReference>
<dbReference type="PDB" id="8HL3">
    <property type="method" value="EM"/>
    <property type="resolution" value="4.80 A"/>
    <property type="chains" value="S12P=3-145"/>
</dbReference>
<dbReference type="PDB" id="8HL4">
    <property type="method" value="EM"/>
    <property type="resolution" value="4.62 A"/>
    <property type="chains" value="S12P=3-145"/>
</dbReference>
<dbReference type="PDB" id="8HL5">
    <property type="method" value="EM"/>
    <property type="resolution" value="5.72 A"/>
    <property type="chains" value="S12P=3-145"/>
</dbReference>
<dbReference type="PDB" id="8WKP">
    <property type="method" value="EM"/>
    <property type="resolution" value="4.62 A"/>
    <property type="chains" value="S12P=3-145"/>
</dbReference>
<dbReference type="PDB" id="8WQ2">
    <property type="method" value="EM"/>
    <property type="resolution" value="4.10 A"/>
    <property type="chains" value="S12P=3-145"/>
</dbReference>
<dbReference type="PDB" id="8WQ4">
    <property type="method" value="EM"/>
    <property type="resolution" value="4.53 A"/>
    <property type="chains" value="S12P=3-145"/>
</dbReference>
<dbReference type="PDBsum" id="8HKX"/>
<dbReference type="PDBsum" id="8HKY"/>
<dbReference type="PDBsum" id="8HKZ"/>
<dbReference type="PDBsum" id="8HL1"/>
<dbReference type="PDBsum" id="8HL2"/>
<dbReference type="PDBsum" id="8HL3"/>
<dbReference type="PDBsum" id="8HL4"/>
<dbReference type="PDBsum" id="8HL5"/>
<dbReference type="PDBsum" id="8WKP"/>
<dbReference type="PDBsum" id="8WQ2"/>
<dbReference type="PDBsum" id="8WQ4"/>
<dbReference type="EMDB" id="EMD-34862"/>
<dbReference type="EMDB" id="EMD-34863"/>
<dbReference type="EMDB" id="EMD-34864"/>
<dbReference type="EMDB" id="EMD-34866"/>
<dbReference type="EMDB" id="EMD-34867"/>
<dbReference type="EMDB" id="EMD-34868"/>
<dbReference type="EMDB" id="EMD-34869"/>
<dbReference type="EMDB" id="EMD-34870"/>
<dbReference type="EMDB" id="EMD-37604"/>
<dbReference type="EMDB" id="EMD-37733"/>
<dbReference type="EMDB" id="EMD-37734"/>
<dbReference type="SMR" id="P11524"/>
<dbReference type="STRING" id="330779.Saci_0688"/>
<dbReference type="GeneID" id="14551203"/>
<dbReference type="KEGG" id="sai:Saci_0688"/>
<dbReference type="PATRIC" id="fig|330779.12.peg.656"/>
<dbReference type="eggNOG" id="arCOG04255">
    <property type="taxonomic scope" value="Archaea"/>
</dbReference>
<dbReference type="HOGENOM" id="CLU_115574_0_1_2"/>
<dbReference type="Proteomes" id="UP000001018">
    <property type="component" value="Chromosome"/>
</dbReference>
<dbReference type="GO" id="GO:0015935">
    <property type="term" value="C:small ribosomal subunit"/>
    <property type="evidence" value="ECO:0007669"/>
    <property type="project" value="InterPro"/>
</dbReference>
<dbReference type="GO" id="GO:0019843">
    <property type="term" value="F:rRNA binding"/>
    <property type="evidence" value="ECO:0007669"/>
    <property type="project" value="UniProtKB-UniRule"/>
</dbReference>
<dbReference type="GO" id="GO:0003735">
    <property type="term" value="F:structural constituent of ribosome"/>
    <property type="evidence" value="ECO:0007669"/>
    <property type="project" value="InterPro"/>
</dbReference>
<dbReference type="GO" id="GO:0006412">
    <property type="term" value="P:translation"/>
    <property type="evidence" value="ECO:0007669"/>
    <property type="project" value="UniProtKB-UniRule"/>
</dbReference>
<dbReference type="CDD" id="cd03367">
    <property type="entry name" value="Ribosomal_S23"/>
    <property type="match status" value="1"/>
</dbReference>
<dbReference type="FunFam" id="2.40.50.140:FF:000007">
    <property type="entry name" value="40S ribosomal protein S23"/>
    <property type="match status" value="1"/>
</dbReference>
<dbReference type="Gene3D" id="2.40.50.140">
    <property type="entry name" value="Nucleic acid-binding proteins"/>
    <property type="match status" value="1"/>
</dbReference>
<dbReference type="HAMAP" id="MF_00403_A">
    <property type="entry name" value="Ribosomal_uS12_A"/>
    <property type="match status" value="1"/>
</dbReference>
<dbReference type="InterPro" id="IPR012340">
    <property type="entry name" value="NA-bd_OB-fold"/>
</dbReference>
<dbReference type="InterPro" id="IPR006032">
    <property type="entry name" value="Ribosomal_uS12"/>
</dbReference>
<dbReference type="InterPro" id="IPR022863">
    <property type="entry name" value="Ribosomal_uS12_arc"/>
</dbReference>
<dbReference type="InterPro" id="IPR005680">
    <property type="entry name" value="Ribosomal_uS12_euk/arc"/>
</dbReference>
<dbReference type="NCBIfam" id="NF003254">
    <property type="entry name" value="PRK04211.1"/>
    <property type="match status" value="1"/>
</dbReference>
<dbReference type="NCBIfam" id="TIGR00982">
    <property type="entry name" value="uS12_E_A"/>
    <property type="match status" value="1"/>
</dbReference>
<dbReference type="PANTHER" id="PTHR11652">
    <property type="entry name" value="30S RIBOSOMAL PROTEIN S12 FAMILY MEMBER"/>
    <property type="match status" value="1"/>
</dbReference>
<dbReference type="Pfam" id="PF00164">
    <property type="entry name" value="Ribosom_S12_S23"/>
    <property type="match status" value="1"/>
</dbReference>
<dbReference type="PIRSF" id="PIRSF002133">
    <property type="entry name" value="Ribosomal_S12/S23"/>
    <property type="match status" value="1"/>
</dbReference>
<dbReference type="SUPFAM" id="SSF50249">
    <property type="entry name" value="Nucleic acid-binding proteins"/>
    <property type="match status" value="1"/>
</dbReference>
<dbReference type="PROSITE" id="PS00055">
    <property type="entry name" value="RIBOSOMAL_S12"/>
    <property type="match status" value="1"/>
</dbReference>